<evidence type="ECO:0000255" key="1">
    <source>
        <dbReference type="HAMAP-Rule" id="MF_00382"/>
    </source>
</evidence>
<evidence type="ECO:0000305" key="2"/>
<proteinExistence type="inferred from homology"/>
<protein>
    <recommendedName>
        <fullName evidence="1">Large ribosomal subunit protein bL20</fullName>
    </recommendedName>
    <alternativeName>
        <fullName evidence="2">50S ribosomal protein L20</fullName>
    </alternativeName>
</protein>
<name>RL20_LACJO</name>
<dbReference type="EMBL" id="AE017198">
    <property type="protein sequence ID" value="AAS09412.1"/>
    <property type="molecule type" value="Genomic_DNA"/>
</dbReference>
<dbReference type="RefSeq" id="WP_011162332.1">
    <property type="nucleotide sequence ID" value="NC_005362.1"/>
</dbReference>
<dbReference type="SMR" id="Q74IC6"/>
<dbReference type="GeneID" id="83570837"/>
<dbReference type="KEGG" id="ljo:LJ_1640"/>
<dbReference type="eggNOG" id="COG0292">
    <property type="taxonomic scope" value="Bacteria"/>
</dbReference>
<dbReference type="HOGENOM" id="CLU_123265_0_1_9"/>
<dbReference type="Proteomes" id="UP000000581">
    <property type="component" value="Chromosome"/>
</dbReference>
<dbReference type="GO" id="GO:1990904">
    <property type="term" value="C:ribonucleoprotein complex"/>
    <property type="evidence" value="ECO:0007669"/>
    <property type="project" value="UniProtKB-KW"/>
</dbReference>
<dbReference type="GO" id="GO:0005840">
    <property type="term" value="C:ribosome"/>
    <property type="evidence" value="ECO:0007669"/>
    <property type="project" value="UniProtKB-KW"/>
</dbReference>
<dbReference type="GO" id="GO:0019843">
    <property type="term" value="F:rRNA binding"/>
    <property type="evidence" value="ECO:0007669"/>
    <property type="project" value="UniProtKB-UniRule"/>
</dbReference>
<dbReference type="GO" id="GO:0003735">
    <property type="term" value="F:structural constituent of ribosome"/>
    <property type="evidence" value="ECO:0007669"/>
    <property type="project" value="InterPro"/>
</dbReference>
<dbReference type="GO" id="GO:0000027">
    <property type="term" value="P:ribosomal large subunit assembly"/>
    <property type="evidence" value="ECO:0007669"/>
    <property type="project" value="UniProtKB-UniRule"/>
</dbReference>
<dbReference type="GO" id="GO:0006412">
    <property type="term" value="P:translation"/>
    <property type="evidence" value="ECO:0007669"/>
    <property type="project" value="InterPro"/>
</dbReference>
<dbReference type="CDD" id="cd07026">
    <property type="entry name" value="Ribosomal_L20"/>
    <property type="match status" value="1"/>
</dbReference>
<dbReference type="FunFam" id="1.10.1900.20:FF:000001">
    <property type="entry name" value="50S ribosomal protein L20"/>
    <property type="match status" value="1"/>
</dbReference>
<dbReference type="Gene3D" id="6.10.160.10">
    <property type="match status" value="1"/>
</dbReference>
<dbReference type="Gene3D" id="1.10.1900.20">
    <property type="entry name" value="Ribosomal protein L20"/>
    <property type="match status" value="1"/>
</dbReference>
<dbReference type="HAMAP" id="MF_00382">
    <property type="entry name" value="Ribosomal_bL20"/>
    <property type="match status" value="1"/>
</dbReference>
<dbReference type="InterPro" id="IPR005813">
    <property type="entry name" value="Ribosomal_bL20"/>
</dbReference>
<dbReference type="InterPro" id="IPR049946">
    <property type="entry name" value="RIBOSOMAL_L20_CS"/>
</dbReference>
<dbReference type="InterPro" id="IPR035566">
    <property type="entry name" value="Ribosomal_protein_bL20_C"/>
</dbReference>
<dbReference type="NCBIfam" id="TIGR01032">
    <property type="entry name" value="rplT_bact"/>
    <property type="match status" value="1"/>
</dbReference>
<dbReference type="PANTHER" id="PTHR10986">
    <property type="entry name" value="39S RIBOSOMAL PROTEIN L20"/>
    <property type="match status" value="1"/>
</dbReference>
<dbReference type="Pfam" id="PF00453">
    <property type="entry name" value="Ribosomal_L20"/>
    <property type="match status" value="1"/>
</dbReference>
<dbReference type="PRINTS" id="PR00062">
    <property type="entry name" value="RIBOSOMALL20"/>
</dbReference>
<dbReference type="SUPFAM" id="SSF74731">
    <property type="entry name" value="Ribosomal protein L20"/>
    <property type="match status" value="1"/>
</dbReference>
<dbReference type="PROSITE" id="PS00937">
    <property type="entry name" value="RIBOSOMAL_L20"/>
    <property type="match status" value="1"/>
</dbReference>
<sequence>MPRTKGGTVTRARRKKIMKLAKGYRGSKHLQFKAASTQVFVSRKYAFRDRKKRKSEFRKLWIARINAAARQNGLSYSKLMHGLKVAGIDMNRKMLADIAYNDEKTFADLADAAKKALN</sequence>
<comment type="function">
    <text evidence="1">Binds directly to 23S ribosomal RNA and is necessary for the in vitro assembly process of the 50S ribosomal subunit. It is not involved in the protein synthesizing functions of that subunit.</text>
</comment>
<comment type="similarity">
    <text evidence="1">Belongs to the bacterial ribosomal protein bL20 family.</text>
</comment>
<organism>
    <name type="scientific">Lactobacillus johnsonii (strain CNCM I-12250 / La1 / NCC 533)</name>
    <dbReference type="NCBI Taxonomy" id="257314"/>
    <lineage>
        <taxon>Bacteria</taxon>
        <taxon>Bacillati</taxon>
        <taxon>Bacillota</taxon>
        <taxon>Bacilli</taxon>
        <taxon>Lactobacillales</taxon>
        <taxon>Lactobacillaceae</taxon>
        <taxon>Lactobacillus</taxon>
    </lineage>
</organism>
<gene>
    <name evidence="1" type="primary">rplT</name>
    <name type="ordered locus">LJ_1640</name>
</gene>
<reference key="1">
    <citation type="journal article" date="2004" name="Proc. Natl. Acad. Sci. U.S.A.">
        <title>The genome sequence of the probiotic intestinal bacterium Lactobacillus johnsonii NCC 533.</title>
        <authorList>
            <person name="Pridmore R.D."/>
            <person name="Berger B."/>
            <person name="Desiere F."/>
            <person name="Vilanova D."/>
            <person name="Barretto C."/>
            <person name="Pittet A.-C."/>
            <person name="Zwahlen M.-C."/>
            <person name="Rouvet M."/>
            <person name="Altermann E."/>
            <person name="Barrangou R."/>
            <person name="Mollet B."/>
            <person name="Mercenier A."/>
            <person name="Klaenhammer T."/>
            <person name="Arigoni F."/>
            <person name="Schell M.A."/>
        </authorList>
    </citation>
    <scope>NUCLEOTIDE SEQUENCE [LARGE SCALE GENOMIC DNA]</scope>
    <source>
        <strain>CNCM I-1225 / La1 / NCC 533</strain>
    </source>
</reference>
<accession>Q74IC6</accession>
<keyword id="KW-0687">Ribonucleoprotein</keyword>
<keyword id="KW-0689">Ribosomal protein</keyword>
<keyword id="KW-0694">RNA-binding</keyword>
<keyword id="KW-0699">rRNA-binding</keyword>
<feature type="chain" id="PRO_0000243692" description="Large ribosomal subunit protein bL20">
    <location>
        <begin position="1"/>
        <end position="118"/>
    </location>
</feature>